<protein>
    <recommendedName>
        <fullName>Putative zinc metalloprotease BMEI0829</fullName>
        <ecNumber>3.4.24.-</ecNumber>
    </recommendedName>
</protein>
<proteinExistence type="inferred from homology"/>
<feature type="chain" id="PRO_0000088432" description="Putative zinc metalloprotease BMEI0829">
    <location>
        <begin position="1"/>
        <end position="379"/>
    </location>
</feature>
<feature type="transmembrane region" description="Helical" evidence="2">
    <location>
        <begin position="39"/>
        <end position="61"/>
    </location>
</feature>
<feature type="transmembrane region" description="Helical" evidence="2">
    <location>
        <begin position="122"/>
        <end position="144"/>
    </location>
</feature>
<feature type="transmembrane region" description="Helical" evidence="2">
    <location>
        <begin position="305"/>
        <end position="327"/>
    </location>
</feature>
<feature type="transmembrane region" description="Helical" evidence="2">
    <location>
        <begin position="355"/>
        <end position="377"/>
    </location>
</feature>
<feature type="domain" description="PDZ" evidence="3">
    <location>
        <begin position="133"/>
        <end position="208"/>
    </location>
</feature>
<feature type="active site" evidence="4">
    <location>
        <position position="34"/>
    </location>
</feature>
<feature type="binding site" evidence="4">
    <location>
        <position position="33"/>
    </location>
    <ligand>
        <name>Zn(2+)</name>
        <dbReference type="ChEBI" id="CHEBI:29105"/>
        <note>catalytic</note>
    </ligand>
</feature>
<feature type="binding site" evidence="4">
    <location>
        <position position="37"/>
    </location>
    <ligand>
        <name>Zn(2+)</name>
        <dbReference type="ChEBI" id="CHEBI:29105"/>
        <note>catalytic</note>
    </ligand>
</feature>
<evidence type="ECO:0000250" key="1"/>
<evidence type="ECO:0000255" key="2"/>
<evidence type="ECO:0000255" key="3">
    <source>
        <dbReference type="PROSITE-ProRule" id="PRU00143"/>
    </source>
</evidence>
<evidence type="ECO:0000255" key="4">
    <source>
        <dbReference type="PROSITE-ProRule" id="PRU10095"/>
    </source>
</evidence>
<evidence type="ECO:0000305" key="5"/>
<accession>Q8YHH1</accession>
<gene>
    <name type="ordered locus">BMEI0829</name>
</gene>
<sequence>MQEALALFFGSESLLVGTIIPFLFVLTVVVFVHEMGHYLVARWCGIGAQAFSIGFGPELLGFTDRHGTRWKLSAIPLVGYVKFIGDESETSSPVGVNESALSEEDRKRAFHTQPVWKRAATVFAGPAFNIILTIAIFSVFFALYGRQIADPLIAGVQPGSPAAEAGFEPGDRFVSVEGEKITTFADVQRIVSGRAGDKLNFTVERDGKMVDLQAVPKIVERTDPLGNKVKLGAIGVETTEAVGNFRRIEYGPLESVGQAVIETGHIIGRTGEFFKRFAVGREDKCQLGGPVKIATMASKAASQGFDWLIQLMAMLSIGIGLLNLFPLPPLDGGHLVFYAVEAIKGSPVSGAAQEIFYRIGFLLVMGFMGFVLFNDLFAC</sequence>
<keyword id="KW-0997">Cell inner membrane</keyword>
<keyword id="KW-1003">Cell membrane</keyword>
<keyword id="KW-0378">Hydrolase</keyword>
<keyword id="KW-0472">Membrane</keyword>
<keyword id="KW-0479">Metal-binding</keyword>
<keyword id="KW-0482">Metalloprotease</keyword>
<keyword id="KW-0645">Protease</keyword>
<keyword id="KW-0812">Transmembrane</keyword>
<keyword id="KW-1133">Transmembrane helix</keyword>
<keyword id="KW-0862">Zinc</keyword>
<dbReference type="EC" id="3.4.24.-"/>
<dbReference type="EMBL" id="AE008917">
    <property type="protein sequence ID" value="AAL52010.1"/>
    <property type="molecule type" value="Genomic_DNA"/>
</dbReference>
<dbReference type="PIR" id="AG3355">
    <property type="entry name" value="AG3355"/>
</dbReference>
<dbReference type="SMR" id="Q8YHH1"/>
<dbReference type="GeneID" id="29593638"/>
<dbReference type="KEGG" id="bme:BMEI0829"/>
<dbReference type="KEGG" id="bmel:DK63_591"/>
<dbReference type="PATRIC" id="fig|224914.52.peg.616"/>
<dbReference type="eggNOG" id="COG0750">
    <property type="taxonomic scope" value="Bacteria"/>
</dbReference>
<dbReference type="PhylomeDB" id="Q8YHH1"/>
<dbReference type="Proteomes" id="UP000000419">
    <property type="component" value="Chromosome I"/>
</dbReference>
<dbReference type="GO" id="GO:0005886">
    <property type="term" value="C:plasma membrane"/>
    <property type="evidence" value="ECO:0007669"/>
    <property type="project" value="UniProtKB-SubCell"/>
</dbReference>
<dbReference type="GO" id="GO:0046872">
    <property type="term" value="F:metal ion binding"/>
    <property type="evidence" value="ECO:0007669"/>
    <property type="project" value="UniProtKB-KW"/>
</dbReference>
<dbReference type="GO" id="GO:0004222">
    <property type="term" value="F:metalloendopeptidase activity"/>
    <property type="evidence" value="ECO:0007669"/>
    <property type="project" value="InterPro"/>
</dbReference>
<dbReference type="GO" id="GO:0006508">
    <property type="term" value="P:proteolysis"/>
    <property type="evidence" value="ECO:0007669"/>
    <property type="project" value="UniProtKB-KW"/>
</dbReference>
<dbReference type="CDD" id="cd23081">
    <property type="entry name" value="cpPDZ_EcRseP-like"/>
    <property type="match status" value="1"/>
</dbReference>
<dbReference type="CDD" id="cd06163">
    <property type="entry name" value="S2P-M50_PDZ_RseP-like"/>
    <property type="match status" value="1"/>
</dbReference>
<dbReference type="Gene3D" id="2.30.42.10">
    <property type="match status" value="1"/>
</dbReference>
<dbReference type="InterPro" id="IPR001478">
    <property type="entry name" value="PDZ"/>
</dbReference>
<dbReference type="InterPro" id="IPR041489">
    <property type="entry name" value="PDZ_6"/>
</dbReference>
<dbReference type="InterPro" id="IPR036034">
    <property type="entry name" value="PDZ_sf"/>
</dbReference>
<dbReference type="InterPro" id="IPR004387">
    <property type="entry name" value="Pept_M50_Zn"/>
</dbReference>
<dbReference type="InterPro" id="IPR008915">
    <property type="entry name" value="Peptidase_M50"/>
</dbReference>
<dbReference type="NCBIfam" id="TIGR00054">
    <property type="entry name" value="RIP metalloprotease RseP"/>
    <property type="match status" value="1"/>
</dbReference>
<dbReference type="PANTHER" id="PTHR42837:SF2">
    <property type="entry name" value="MEMBRANE METALLOPROTEASE ARASP2, CHLOROPLASTIC-RELATED"/>
    <property type="match status" value="1"/>
</dbReference>
<dbReference type="PANTHER" id="PTHR42837">
    <property type="entry name" value="REGULATOR OF SIGMA-E PROTEASE RSEP"/>
    <property type="match status" value="1"/>
</dbReference>
<dbReference type="Pfam" id="PF17820">
    <property type="entry name" value="PDZ_6"/>
    <property type="match status" value="1"/>
</dbReference>
<dbReference type="Pfam" id="PF02163">
    <property type="entry name" value="Peptidase_M50"/>
    <property type="match status" value="1"/>
</dbReference>
<dbReference type="SMART" id="SM00228">
    <property type="entry name" value="PDZ"/>
    <property type="match status" value="1"/>
</dbReference>
<dbReference type="SUPFAM" id="SSF50156">
    <property type="entry name" value="PDZ domain-like"/>
    <property type="match status" value="1"/>
</dbReference>
<dbReference type="PROSITE" id="PS50106">
    <property type="entry name" value="PDZ"/>
    <property type="match status" value="1"/>
</dbReference>
<dbReference type="PROSITE" id="PS00142">
    <property type="entry name" value="ZINC_PROTEASE"/>
    <property type="match status" value="1"/>
</dbReference>
<comment type="cofactor">
    <cofactor evidence="5">
        <name>Zn(2+)</name>
        <dbReference type="ChEBI" id="CHEBI:29105"/>
    </cofactor>
</comment>
<comment type="subcellular location">
    <subcellularLocation>
        <location evidence="1">Cell inner membrane</location>
        <topology evidence="1">Multi-pass membrane protein</topology>
    </subcellularLocation>
</comment>
<comment type="similarity">
    <text evidence="5">Belongs to the peptidase M50B family.</text>
</comment>
<organism>
    <name type="scientific">Brucella melitensis biotype 1 (strain ATCC 23456 / CCUG 17765 / NCTC 10094 / 16M)</name>
    <dbReference type="NCBI Taxonomy" id="224914"/>
    <lineage>
        <taxon>Bacteria</taxon>
        <taxon>Pseudomonadati</taxon>
        <taxon>Pseudomonadota</taxon>
        <taxon>Alphaproteobacteria</taxon>
        <taxon>Hyphomicrobiales</taxon>
        <taxon>Brucellaceae</taxon>
        <taxon>Brucella/Ochrobactrum group</taxon>
        <taxon>Brucella</taxon>
    </lineage>
</organism>
<name>Y829_BRUME</name>
<reference key="1">
    <citation type="journal article" date="2002" name="Proc. Natl. Acad. Sci. U.S.A.">
        <title>The genome sequence of the facultative intracellular pathogen Brucella melitensis.</title>
        <authorList>
            <person name="DelVecchio V.G."/>
            <person name="Kapatral V."/>
            <person name="Redkar R.J."/>
            <person name="Patra G."/>
            <person name="Mujer C."/>
            <person name="Los T."/>
            <person name="Ivanova N."/>
            <person name="Anderson I."/>
            <person name="Bhattacharyya A."/>
            <person name="Lykidis A."/>
            <person name="Reznik G."/>
            <person name="Jablonski L."/>
            <person name="Larsen N."/>
            <person name="D'Souza M."/>
            <person name="Bernal A."/>
            <person name="Mazur M."/>
            <person name="Goltsman E."/>
            <person name="Selkov E."/>
            <person name="Elzer P.H."/>
            <person name="Hagius S."/>
            <person name="O'Callaghan D."/>
            <person name="Letesson J.-J."/>
            <person name="Haselkorn R."/>
            <person name="Kyrpides N.C."/>
            <person name="Overbeek R."/>
        </authorList>
    </citation>
    <scope>NUCLEOTIDE SEQUENCE [LARGE SCALE GENOMIC DNA]</scope>
    <source>
        <strain>ATCC 23456 / CCUG 17765 / NCTC 10094 / 16M</strain>
    </source>
</reference>